<proteinExistence type="inferred from homology"/>
<organismHost>
    <name type="scientific">Homo sapiens</name>
    <name type="common">Human</name>
    <dbReference type="NCBI Taxonomy" id="9606"/>
</organismHost>
<gene>
    <name evidence="1" type="primary">CVC1</name>
    <name type="ordered locus">U64</name>
</gene>
<reference key="1">
    <citation type="journal article" date="1996" name="J. Virol.">
        <title>Determination and analysis of the complete nucleotide sequence of human herpesvirus.</title>
        <authorList>
            <person name="Nicholas J."/>
        </authorList>
    </citation>
    <scope>NUCLEOTIDE SEQUENCE [LARGE SCALE GENOMIC DNA]</scope>
</reference>
<accession>P52360</accession>
<sequence>MEMHLLCETMFTCRKNNILPVHLCILLDDVIHKEKVKAIEGIFFQCVFFKEKLVYTEWTKIKFTYVLHDLVISQIFKNACIKEVIHGALILSVPINIDNLHFDTDILILKIIYPHFLHDDIVIKLSEILSGAPRMQKTVEKKQEVEKPFFHIPAKLGDLTKEDPISFNHHGPLEPPSTVRGLKQSANVRHSHPISRPEKANVTFLSDSWYSQNLKCDFISDIQQRHVLVIFWYELSKGIQMQIKNIQIPPENLFSSITNYLDRVNTYLDEIAERTFRCITTNMEIQNRHLPQKFNSHFQIEFNCTHLISGMELARDFWILSLDRNSCVLKAMASHFLHKKKGRSSLSSNEFWADLIDCTTGKTLYGEKVRWQLNSETSLYSTFRKNQNISWELQPNCYALYMSENLKLYWVLPGGFCVSGTFKLKENDEFFFDWQFGMS</sequence>
<evidence type="ECO:0000255" key="1">
    <source>
        <dbReference type="HAMAP-Rule" id="MF_04017"/>
    </source>
</evidence>
<organism>
    <name type="scientific">Human herpesvirus 7 (strain JI)</name>
    <name type="common">HHV-7</name>
    <name type="synonym">Human T lymphotropic virus</name>
    <dbReference type="NCBI Taxonomy" id="57278"/>
    <lineage>
        <taxon>Viruses</taxon>
        <taxon>Duplodnaviria</taxon>
        <taxon>Heunggongvirae</taxon>
        <taxon>Peploviricota</taxon>
        <taxon>Herviviricetes</taxon>
        <taxon>Herpesvirales</taxon>
        <taxon>Orthoherpesviridae</taxon>
        <taxon>Betaherpesvirinae</taxon>
        <taxon>Roseolovirus</taxon>
        <taxon>Roseolovirus humanbeta7</taxon>
        <taxon>Human betaherpesvirus 7</taxon>
    </lineage>
</organism>
<protein>
    <recommendedName>
        <fullName evidence="1">Capsid vertex component 1</fullName>
    </recommendedName>
</protein>
<name>CVC1_HHV7J</name>
<keyword id="KW-0167">Capsid protein</keyword>
<keyword id="KW-1048">Host nucleus</keyword>
<keyword id="KW-0426">Late protein</keyword>
<keyword id="KW-1185">Reference proteome</keyword>
<keyword id="KW-0231">Viral genome packaging</keyword>
<keyword id="KW-1188">Viral release from host cell</keyword>
<keyword id="KW-0946">Virion</keyword>
<comment type="function">
    <text evidence="1">Capsid vertex-specific component that plays a role during viral DNA encapsidation, assuring correct genome cleavage and presumably stabilizing capsids that contain full-length viral genomes.</text>
</comment>
<comment type="subunit">
    <text evidence="1">Interacts (via C-terminus) with capsid vertex component 2/CVC2.</text>
</comment>
<comment type="subcellular location">
    <subcellularLocation>
        <location evidence="1">Virion</location>
    </subcellularLocation>
    <subcellularLocation>
        <location evidence="1">Host nucleus</location>
    </subcellularLocation>
</comment>
<comment type="similarity">
    <text evidence="1">Belongs to the herpesviridae CVC1 protein family.</text>
</comment>
<feature type="chain" id="PRO_0000115960" description="Capsid vertex component 1">
    <location>
        <begin position="1"/>
        <end position="439"/>
    </location>
</feature>
<dbReference type="EMBL" id="U43400">
    <property type="protein sequence ID" value="AAC54726.1"/>
    <property type="molecule type" value="Genomic_DNA"/>
</dbReference>
<dbReference type="PIR" id="T41966">
    <property type="entry name" value="T41966"/>
</dbReference>
<dbReference type="SMR" id="P52360"/>
<dbReference type="Proteomes" id="UP000009246">
    <property type="component" value="Segment"/>
</dbReference>
<dbReference type="GO" id="GO:0042025">
    <property type="term" value="C:host cell nucleus"/>
    <property type="evidence" value="ECO:0007669"/>
    <property type="project" value="UniProtKB-SubCell"/>
</dbReference>
<dbReference type="GO" id="GO:0019028">
    <property type="term" value="C:viral capsid"/>
    <property type="evidence" value="ECO:0007669"/>
    <property type="project" value="UniProtKB-KW"/>
</dbReference>
<dbReference type="GO" id="GO:0051276">
    <property type="term" value="P:chromosome organization"/>
    <property type="evidence" value="ECO:0007669"/>
    <property type="project" value="InterPro"/>
</dbReference>
<dbReference type="HAMAP" id="MF_04017">
    <property type="entry name" value="HSV_CVC1"/>
    <property type="match status" value="1"/>
</dbReference>
<dbReference type="InterPro" id="IPR007640">
    <property type="entry name" value="UL17-like"/>
</dbReference>
<dbReference type="Pfam" id="PF04559">
    <property type="entry name" value="Herpes_UL17"/>
    <property type="match status" value="1"/>
</dbReference>